<organism>
    <name type="scientific">Methylorubrum extorquens (strain ATCC 14718 / DSM 1338 / JCM 2805 / NCIMB 9133 / AM1)</name>
    <name type="common">Methylobacterium extorquens</name>
    <dbReference type="NCBI Taxonomy" id="272630"/>
    <lineage>
        <taxon>Bacteria</taxon>
        <taxon>Pseudomonadati</taxon>
        <taxon>Pseudomonadota</taxon>
        <taxon>Alphaproteobacteria</taxon>
        <taxon>Hyphomicrobiales</taxon>
        <taxon>Methylobacteriaceae</taxon>
        <taxon>Methylorubrum</taxon>
    </lineage>
</organism>
<evidence type="ECO:0000250" key="1"/>
<evidence type="ECO:0000269" key="2">
    <source>
    </source>
</evidence>
<evidence type="ECO:0000269" key="3">
    <source>
    </source>
</evidence>
<evidence type="ECO:0000269" key="4">
    <source>
    </source>
</evidence>
<evidence type="ECO:0000305" key="5"/>
<evidence type="ECO:0007829" key="6">
    <source>
        <dbReference type="PDB" id="1H4I"/>
    </source>
</evidence>
<evidence type="ECO:0007829" key="7">
    <source>
        <dbReference type="PDB" id="1H4J"/>
    </source>
</evidence>
<evidence type="ECO:0007829" key="8">
    <source>
        <dbReference type="PDB" id="1W6S"/>
    </source>
</evidence>
<feature type="signal peptide" evidence="3">
    <location>
        <begin position="1"/>
        <end position="27"/>
    </location>
</feature>
<feature type="chain" id="PRO_0000025566" description="Methanol dehydrogenase [cytochrome c] subunit 1">
    <location>
        <begin position="28"/>
        <end position="626"/>
    </location>
</feature>
<feature type="active site" description="Proton acceptor" evidence="1">
    <location>
        <position position="330"/>
    </location>
</feature>
<feature type="binding site">
    <location>
        <position position="204"/>
    </location>
    <ligand>
        <name>Ca(2+)</name>
        <dbReference type="ChEBI" id="CHEBI:29108"/>
    </ligand>
</feature>
<feature type="binding site">
    <location>
        <position position="288"/>
    </location>
    <ligand>
        <name>Ca(2+)</name>
        <dbReference type="ChEBI" id="CHEBI:29108"/>
    </ligand>
</feature>
<feature type="disulfide bond" evidence="4">
    <location>
        <begin position="130"/>
        <end position="131"/>
    </location>
</feature>
<feature type="disulfide bond" evidence="4">
    <location>
        <begin position="413"/>
        <end position="442"/>
    </location>
</feature>
<feature type="mutagenesis site" description="Inactive." evidence="2">
    <original>C</original>
    <variation>S</variation>
    <location>
        <position position="130"/>
    </location>
</feature>
<feature type="mutagenesis site" description="Inactive." evidence="2">
    <original>C</original>
    <variation>S</variation>
    <location>
        <position position="131"/>
    </location>
</feature>
<feature type="mutagenesis site" description="Lower affinity for methanol." evidence="2">
    <original>D</original>
    <variation>E</variation>
    <location>
        <position position="330"/>
    </location>
</feature>
<feature type="helix" evidence="8">
    <location>
        <begin position="29"/>
        <end position="35"/>
    </location>
</feature>
<feature type="turn" evidence="8">
    <location>
        <begin position="61"/>
        <end position="63"/>
    </location>
</feature>
<feature type="helix" evidence="8">
    <location>
        <begin position="64"/>
        <end position="66"/>
    </location>
</feature>
<feature type="strand" evidence="8">
    <location>
        <begin position="67"/>
        <end position="74"/>
    </location>
</feature>
<feature type="strand" evidence="8">
    <location>
        <begin position="86"/>
        <end position="88"/>
    </location>
</feature>
<feature type="strand" evidence="8">
    <location>
        <begin position="91"/>
        <end position="95"/>
    </location>
</feature>
<feature type="turn" evidence="8">
    <location>
        <begin position="98"/>
        <end position="100"/>
    </location>
</feature>
<feature type="strand" evidence="8">
    <location>
        <begin position="102"/>
        <end position="106"/>
    </location>
</feature>
<feature type="strand" evidence="8">
    <location>
        <begin position="112"/>
        <end position="117"/>
    </location>
</feature>
<feature type="helix" evidence="8">
    <location>
        <begin position="123"/>
        <end position="128"/>
    </location>
</feature>
<feature type="strand" evidence="8">
    <location>
        <begin position="139"/>
        <end position="141"/>
    </location>
</feature>
<feature type="strand" evidence="8">
    <location>
        <begin position="145"/>
        <end position="147"/>
    </location>
</feature>
<feature type="strand" evidence="8">
    <location>
        <begin position="150"/>
        <end position="154"/>
    </location>
</feature>
<feature type="strand" evidence="8">
    <location>
        <begin position="158"/>
        <end position="164"/>
    </location>
</feature>
<feature type="turn" evidence="8">
    <location>
        <begin position="165"/>
        <end position="167"/>
    </location>
</feature>
<feature type="strand" evidence="8">
    <location>
        <begin position="170"/>
        <end position="175"/>
    </location>
</feature>
<feature type="helix" evidence="8">
    <location>
        <begin position="179"/>
        <end position="181"/>
    </location>
</feature>
<feature type="strand" evidence="8">
    <location>
        <begin position="190"/>
        <end position="192"/>
    </location>
</feature>
<feature type="strand" evidence="8">
    <location>
        <begin position="195"/>
        <end position="198"/>
    </location>
</feature>
<feature type="helix" evidence="8">
    <location>
        <begin position="203"/>
        <end position="205"/>
    </location>
</feature>
<feature type="strand" evidence="8">
    <location>
        <begin position="210"/>
        <end position="215"/>
    </location>
</feature>
<feature type="turn" evidence="8">
    <location>
        <begin position="216"/>
        <end position="218"/>
    </location>
</feature>
<feature type="strand" evidence="8">
    <location>
        <begin position="221"/>
        <end position="229"/>
    </location>
</feature>
<feature type="helix" evidence="8">
    <location>
        <begin position="231"/>
        <end position="234"/>
    </location>
</feature>
<feature type="turn" evidence="8">
    <location>
        <begin position="238"/>
        <end position="243"/>
    </location>
</feature>
<feature type="helix" evidence="8">
    <location>
        <begin position="245"/>
        <end position="247"/>
    </location>
</feature>
<feature type="helix" evidence="8">
    <location>
        <begin position="252"/>
        <end position="255"/>
    </location>
</feature>
<feature type="helix" evidence="8">
    <location>
        <begin position="261"/>
        <end position="264"/>
    </location>
</feature>
<feature type="strand" evidence="7">
    <location>
        <begin position="274"/>
        <end position="276"/>
    </location>
</feature>
<feature type="turn" evidence="8">
    <location>
        <begin position="277"/>
        <end position="279"/>
    </location>
</feature>
<feature type="strand" evidence="8">
    <location>
        <begin position="281"/>
        <end position="285"/>
    </location>
</feature>
<feature type="helix" evidence="8">
    <location>
        <begin position="294"/>
        <end position="296"/>
    </location>
</feature>
<feature type="strand" evidence="8">
    <location>
        <begin position="304"/>
        <end position="311"/>
    </location>
</feature>
<feature type="turn" evidence="8">
    <location>
        <begin position="312"/>
        <end position="314"/>
    </location>
</feature>
<feature type="strand" evidence="8">
    <location>
        <begin position="317"/>
        <end position="324"/>
    </location>
</feature>
<feature type="strand" evidence="8">
    <location>
        <begin position="338"/>
        <end position="343"/>
    </location>
</feature>
<feature type="strand" evidence="8">
    <location>
        <begin position="349"/>
        <end position="356"/>
    </location>
</feature>
<feature type="strand" evidence="8">
    <location>
        <begin position="360"/>
        <end position="366"/>
    </location>
</feature>
<feature type="turn" evidence="8">
    <location>
        <begin position="367"/>
        <end position="369"/>
    </location>
</feature>
<feature type="strand" evidence="8">
    <location>
        <begin position="372"/>
        <end position="379"/>
    </location>
</feature>
<feature type="strand" evidence="8">
    <location>
        <begin position="384"/>
        <end position="388"/>
    </location>
</feature>
<feature type="turn" evidence="8">
    <location>
        <begin position="390"/>
        <end position="392"/>
    </location>
</feature>
<feature type="strand" evidence="8">
    <location>
        <begin position="395"/>
        <end position="397"/>
    </location>
</feature>
<feature type="helix" evidence="8">
    <location>
        <begin position="399"/>
        <end position="401"/>
    </location>
</feature>
<feature type="strand" evidence="8">
    <location>
        <begin position="409"/>
        <end position="414"/>
    </location>
</feature>
<feature type="strand" evidence="8">
    <location>
        <begin position="426"/>
        <end position="428"/>
    </location>
</feature>
<feature type="turn" evidence="8">
    <location>
        <begin position="429"/>
        <end position="432"/>
    </location>
</feature>
<feature type="strand" evidence="8">
    <location>
        <begin position="433"/>
        <end position="439"/>
    </location>
</feature>
<feature type="strand" evidence="8">
    <location>
        <begin position="441"/>
        <end position="447"/>
    </location>
</feature>
<feature type="strand" evidence="8">
    <location>
        <begin position="461"/>
        <end position="467"/>
    </location>
</feature>
<feature type="turn" evidence="8">
    <location>
        <begin position="473"/>
        <end position="476"/>
    </location>
</feature>
<feature type="strand" evidence="8">
    <location>
        <begin position="480"/>
        <end position="485"/>
    </location>
</feature>
<feature type="turn" evidence="8">
    <location>
        <begin position="487"/>
        <end position="489"/>
    </location>
</feature>
<feature type="strand" evidence="8">
    <location>
        <begin position="492"/>
        <end position="500"/>
    </location>
</feature>
<feature type="strand" evidence="8">
    <location>
        <begin position="507"/>
        <end position="509"/>
    </location>
</feature>
<feature type="turn" evidence="8">
    <location>
        <begin position="510"/>
        <end position="512"/>
    </location>
</feature>
<feature type="strand" evidence="8">
    <location>
        <begin position="513"/>
        <end position="517"/>
    </location>
</feature>
<feature type="strand" evidence="8">
    <location>
        <begin position="521"/>
        <end position="527"/>
    </location>
</feature>
<feature type="turn" evidence="8">
    <location>
        <begin position="528"/>
        <end position="530"/>
    </location>
</feature>
<feature type="strand" evidence="8">
    <location>
        <begin position="533"/>
        <end position="538"/>
    </location>
</feature>
<feature type="strand" evidence="8">
    <location>
        <begin position="548"/>
        <end position="552"/>
    </location>
</feature>
<feature type="strand" evidence="8">
    <location>
        <begin position="555"/>
        <end position="562"/>
    </location>
</feature>
<feature type="turn" evidence="8">
    <location>
        <begin position="566"/>
        <end position="569"/>
    </location>
</feature>
<feature type="helix" evidence="8">
    <location>
        <begin position="570"/>
        <end position="574"/>
    </location>
</feature>
<feature type="turn" evidence="6">
    <location>
        <begin position="579"/>
        <end position="581"/>
    </location>
</feature>
<feature type="helix" evidence="8">
    <location>
        <begin position="582"/>
        <end position="584"/>
    </location>
</feature>
<feature type="helix" evidence="8">
    <location>
        <begin position="585"/>
        <end position="588"/>
    </location>
</feature>
<feature type="turn" evidence="8">
    <location>
        <begin position="589"/>
        <end position="591"/>
    </location>
</feature>
<feature type="helix" evidence="8">
    <location>
        <begin position="592"/>
        <end position="594"/>
    </location>
</feature>
<feature type="strand" evidence="8">
    <location>
        <begin position="601"/>
        <end position="607"/>
    </location>
</feature>
<feature type="helix" evidence="6">
    <location>
        <begin position="612"/>
        <end position="614"/>
    </location>
</feature>
<feature type="turn" evidence="8">
    <location>
        <begin position="616"/>
        <end position="619"/>
    </location>
</feature>
<keyword id="KW-0002">3D-structure</keyword>
<keyword id="KW-0106">Calcium</keyword>
<keyword id="KW-0997">Cell inner membrane</keyword>
<keyword id="KW-1003">Cell membrane</keyword>
<keyword id="KW-0903">Direct protein sequencing</keyword>
<keyword id="KW-1015">Disulfide bond</keyword>
<keyword id="KW-0472">Membrane</keyword>
<keyword id="KW-0479">Metal-binding</keyword>
<keyword id="KW-0485">Methanol utilization</keyword>
<keyword id="KW-0560">Oxidoreductase</keyword>
<keyword id="KW-0634">PQQ</keyword>
<keyword id="KW-1185">Reference proteome</keyword>
<keyword id="KW-0732">Signal</keyword>
<proteinExistence type="evidence at protein level"/>
<reference key="1">
    <citation type="journal article" date="1990" name="Gene">
        <title>Nucleotide sequence of the Methylobacterium extorquens AM1 moxF and moxJ genes involved in methanol oxidation.</title>
        <authorList>
            <person name="Anderson D.J."/>
            <person name="Morris C.J."/>
            <person name="Nunn D.N."/>
            <person name="Anthony C."/>
            <person name="Lidstrom M.E."/>
        </authorList>
    </citation>
    <scope>NUCLEOTIDE SEQUENCE [GENOMIC DNA]</scope>
</reference>
<reference key="2">
    <citation type="journal article" date="2009" name="PLoS ONE">
        <title>Methylobacterium genome sequences: a reference blueprint to investigate microbial metabolism of C1 compounds from natural and industrial sources.</title>
        <authorList>
            <person name="Vuilleumier S."/>
            <person name="Chistoserdova L."/>
            <person name="Lee M.-C."/>
            <person name="Bringel F."/>
            <person name="Lajus A."/>
            <person name="Zhou Y."/>
            <person name="Gourion B."/>
            <person name="Barbe V."/>
            <person name="Chang J."/>
            <person name="Cruveiller S."/>
            <person name="Dossat C."/>
            <person name="Gillett W."/>
            <person name="Gruffaz C."/>
            <person name="Haugen E."/>
            <person name="Hourcade E."/>
            <person name="Levy R."/>
            <person name="Mangenot S."/>
            <person name="Muller E."/>
            <person name="Nadalig T."/>
            <person name="Pagni M."/>
            <person name="Penny C."/>
            <person name="Peyraud R."/>
            <person name="Robinson D.G."/>
            <person name="Roche D."/>
            <person name="Rouy Z."/>
            <person name="Saenampechek C."/>
            <person name="Salvignol G."/>
            <person name="Vallenet D."/>
            <person name="Wu Z."/>
            <person name="Marx C.J."/>
            <person name="Vorholt J.A."/>
            <person name="Olson M.V."/>
            <person name="Kaul R."/>
            <person name="Weissenbach J."/>
            <person name="Medigue C."/>
            <person name="Lidstrom M.E."/>
        </authorList>
    </citation>
    <scope>NUCLEOTIDE SEQUENCE [LARGE SCALE GENOMIC DNA]</scope>
    <source>
        <strain>ATCC 14718 / DSM 1338 / JCM 2805 / NCIMB 9133 / AM1</strain>
    </source>
</reference>
<reference key="3">
    <citation type="journal article" date="1989" name="Biochem. J.">
        <title>The second subunit of methanol dehydrogenase of Methylobacterium extorquens AM1.</title>
        <authorList>
            <person name="Nunn D.N."/>
            <person name="Day D."/>
            <person name="Anthony C."/>
        </authorList>
    </citation>
    <scope>PROTEIN SEQUENCE OF 28-53</scope>
    <scope>SUBUNIT</scope>
</reference>
<reference key="4">
    <citation type="journal article" date="2001" name="Antioxid. Redox Signal.">
        <title>Pyrroloquinoline quinone (PQQ) and quinoprotein enzymes.</title>
        <authorList>
            <person name="Anthony C."/>
        </authorList>
    </citation>
    <scope>REVIEW</scope>
</reference>
<reference key="5">
    <citation type="journal article" date="1994" name="Nat. Struct. Biol.">
        <title>The active site of methanol dehydrogenase contains a disulphide bridge between adjacent cysteine residues.</title>
        <authorList>
            <person name="Blake C.C.F."/>
            <person name="Ghosh M."/>
            <person name="Harlos K."/>
            <person name="Avezoux A."/>
            <person name="Anthony C."/>
        </authorList>
    </citation>
    <scope>DISULFIDE BONDS</scope>
</reference>
<reference key="6">
    <citation type="journal article" date="1995" name="Structure">
        <title>The refined structure of the quinoprotein methanol dehydrogenase from Methylobacterium extorquens at 1.94 A.</title>
        <authorList>
            <person name="Ghosh M."/>
            <person name="Anthony C."/>
            <person name="Harlos K."/>
            <person name="Goodwin M.G."/>
            <person name="Blake C."/>
        </authorList>
    </citation>
    <scope>X-RAY CRYSTALLOGRAPHY (1.94 ANGSTROMS)</scope>
</reference>
<reference key="7">
    <citation type="journal article" date="2001" name="Biochemistry">
        <title>Site-directed mutagenesis and X-ray crystallography of the PQQ-containing quinoprotein methanol dehydrogenase and its electron acceptor, cytochrome c(L).</title>
        <authorList>
            <person name="Afolabi P.R."/>
            <person name="Mohammed F."/>
            <person name="Amaratunga K."/>
            <person name="Majekodunmi O."/>
            <person name="Dales S.L."/>
            <person name="Gill R."/>
            <person name="Thompson D."/>
            <person name="Cooper J.B."/>
            <person name="Wood S.P."/>
            <person name="Goodwin P.M."/>
            <person name="Anthony C."/>
        </authorList>
    </citation>
    <scope>X-RAY CRYSTALLOGRAPHY (3.0 ANGSTROMS) OF MUTANT GLU-330</scope>
    <scope>MUTAGENESIS OF CYS-130; CYS-131 AND ASP-330</scope>
    <scope>CATALYTIC ACTIVITY</scope>
    <scope>REACTION MECHANISM</scope>
</reference>
<comment type="function">
    <text>Catalyzes the oxidation of primary alcohols including methanol.</text>
</comment>
<comment type="catalytic activity">
    <reaction evidence="2">
        <text>2 Fe(III)-[cytochrome cL] + a primary alcohol = 2 Fe(II)-[cytochrome cL] + an aldehyde + 2 H(+)</text>
        <dbReference type="Rhea" id="RHEA:51004"/>
        <dbReference type="Rhea" id="RHEA-COMP:12863"/>
        <dbReference type="Rhea" id="RHEA-COMP:12864"/>
        <dbReference type="ChEBI" id="CHEBI:15378"/>
        <dbReference type="ChEBI" id="CHEBI:15734"/>
        <dbReference type="ChEBI" id="CHEBI:17478"/>
        <dbReference type="ChEBI" id="CHEBI:29033"/>
        <dbReference type="ChEBI" id="CHEBI:29034"/>
        <dbReference type="EC" id="1.1.2.7"/>
    </reaction>
</comment>
<comment type="cofactor">
    <cofactor>
        <name>pyrroloquinoline quinone</name>
        <dbReference type="ChEBI" id="CHEBI:58442"/>
    </cofactor>
    <text>Binds 1 PQQ group per subunit. PQQ is inserted between disulfide Cys-130-Cys-131 and the indole ring of Trp-270.</text>
</comment>
<comment type="cofactor">
    <cofactor>
        <name>Ca(2+)</name>
        <dbReference type="ChEBI" id="CHEBI:29108"/>
    </cofactor>
    <text>Binds 1 Ca(2+) ion per subunit.</text>
</comment>
<comment type="subunit">
    <text evidence="3">Heterotetramer composed of 2 alpha and 2 beta subunits.</text>
</comment>
<comment type="subcellular location">
    <subcellularLocation>
        <location>Cell inner membrane</location>
        <topology>Peripheral membrane protein</topology>
        <orientation>Periplasmic side</orientation>
    </subcellularLocation>
    <text>Periplasmic, but associated with inner membrane.</text>
</comment>
<comment type="similarity">
    <text evidence="5">Belongs to the bacterial PQQ dehydrogenase family.</text>
</comment>
<comment type="sequence caution" evidence="5">
    <conflict type="erroneous initiation">
        <sequence resource="EMBL-CDS" id="ACS42169"/>
    </conflict>
</comment>
<dbReference type="EC" id="1.1.2.7"/>
<dbReference type="EMBL" id="M31108">
    <property type="protein sequence ID" value="AAA25380.1"/>
    <property type="molecule type" value="Genomic_DNA"/>
</dbReference>
<dbReference type="EMBL" id="CP001510">
    <property type="protein sequence ID" value="ACS42169.1"/>
    <property type="status" value="ALT_INIT"/>
    <property type="molecule type" value="Genomic_DNA"/>
</dbReference>
<dbReference type="PIR" id="JQ0706">
    <property type="entry name" value="JQ0706"/>
</dbReference>
<dbReference type="RefSeq" id="WP_003599114.1">
    <property type="nucleotide sequence ID" value="NC_012808.1"/>
</dbReference>
<dbReference type="PDB" id="1H4I">
    <property type="method" value="X-ray"/>
    <property type="resolution" value="1.94 A"/>
    <property type="chains" value="A/C=28-626"/>
</dbReference>
<dbReference type="PDB" id="1H4J">
    <property type="method" value="X-ray"/>
    <property type="resolution" value="3.00 A"/>
    <property type="chains" value="A/C/E/G=28-626"/>
</dbReference>
<dbReference type="PDB" id="1W6S">
    <property type="method" value="X-ray"/>
    <property type="resolution" value="1.20 A"/>
    <property type="chains" value="A/C=28-626"/>
</dbReference>
<dbReference type="PDBsum" id="1H4I"/>
<dbReference type="PDBsum" id="1H4J"/>
<dbReference type="PDBsum" id="1W6S"/>
<dbReference type="SMR" id="P16027"/>
<dbReference type="STRING" id="272630.MexAM1_META1p4538"/>
<dbReference type="KEGG" id="mea:Mex_1p4538"/>
<dbReference type="eggNOG" id="COG4993">
    <property type="taxonomic scope" value="Bacteria"/>
</dbReference>
<dbReference type="HOGENOM" id="CLU_018478_0_0_5"/>
<dbReference type="OrthoDB" id="9794322at2"/>
<dbReference type="BioCyc" id="MetaCyc:MONOMER-3921"/>
<dbReference type="BRENDA" id="1.1.2.7">
    <property type="organism ID" value="3296"/>
</dbReference>
<dbReference type="EvolutionaryTrace" id="P16027"/>
<dbReference type="Proteomes" id="UP000009081">
    <property type="component" value="Chromosome"/>
</dbReference>
<dbReference type="GO" id="GO:0030288">
    <property type="term" value="C:outer membrane-bounded periplasmic space"/>
    <property type="evidence" value="ECO:0007669"/>
    <property type="project" value="InterPro"/>
</dbReference>
<dbReference type="GO" id="GO:0005886">
    <property type="term" value="C:plasma membrane"/>
    <property type="evidence" value="ECO:0007669"/>
    <property type="project" value="UniProtKB-SubCell"/>
</dbReference>
<dbReference type="GO" id="GO:0052933">
    <property type="term" value="F:alcohol dehydrogenase (cytochrome c(L)) activity"/>
    <property type="evidence" value="ECO:0007669"/>
    <property type="project" value="UniProtKB-EC"/>
</dbReference>
<dbReference type="GO" id="GO:0005509">
    <property type="term" value="F:calcium ion binding"/>
    <property type="evidence" value="ECO:0007669"/>
    <property type="project" value="InterPro"/>
</dbReference>
<dbReference type="GO" id="GO:0015945">
    <property type="term" value="P:methanol metabolic process"/>
    <property type="evidence" value="ECO:0007669"/>
    <property type="project" value="UniProtKB-KW"/>
</dbReference>
<dbReference type="CDD" id="cd10278">
    <property type="entry name" value="PQQ_MDH"/>
    <property type="match status" value="1"/>
</dbReference>
<dbReference type="FunFam" id="2.140.10.10:FF:000003">
    <property type="entry name" value="Methanol dehydrogenase, large subunit"/>
    <property type="match status" value="1"/>
</dbReference>
<dbReference type="Gene3D" id="2.140.10.10">
    <property type="entry name" value="Quinoprotein alcohol dehydrogenase-like superfamily"/>
    <property type="match status" value="1"/>
</dbReference>
<dbReference type="InterPro" id="IPR018391">
    <property type="entry name" value="PQQ_b-propeller_rpt"/>
</dbReference>
<dbReference type="InterPro" id="IPR017512">
    <property type="entry name" value="PQQ_MeOH/EtOH_DH"/>
</dbReference>
<dbReference type="InterPro" id="IPR002372">
    <property type="entry name" value="PQQ_rpt_dom"/>
</dbReference>
<dbReference type="InterPro" id="IPR011047">
    <property type="entry name" value="Quinoprotein_ADH-like_sf"/>
</dbReference>
<dbReference type="InterPro" id="IPR001479">
    <property type="entry name" value="Quinoprotein_DH_CS"/>
</dbReference>
<dbReference type="NCBIfam" id="TIGR03075">
    <property type="entry name" value="PQQ_enz_alc_DH"/>
    <property type="match status" value="1"/>
</dbReference>
<dbReference type="PANTHER" id="PTHR32303">
    <property type="entry name" value="QUINOPROTEIN ALCOHOL DEHYDROGENASE (CYTOCHROME C)"/>
    <property type="match status" value="1"/>
</dbReference>
<dbReference type="PANTHER" id="PTHR32303:SF4">
    <property type="entry name" value="QUINOPROTEIN GLUCOSE DEHYDROGENASE"/>
    <property type="match status" value="1"/>
</dbReference>
<dbReference type="Pfam" id="PF01011">
    <property type="entry name" value="PQQ"/>
    <property type="match status" value="2"/>
</dbReference>
<dbReference type="SMART" id="SM00564">
    <property type="entry name" value="PQQ"/>
    <property type="match status" value="3"/>
</dbReference>
<dbReference type="SUPFAM" id="SSF50998">
    <property type="entry name" value="Quinoprotein alcohol dehydrogenase-like"/>
    <property type="match status" value="1"/>
</dbReference>
<dbReference type="PROSITE" id="PS00363">
    <property type="entry name" value="BACTERIAL_PQQ_1"/>
    <property type="match status" value="1"/>
</dbReference>
<dbReference type="PROSITE" id="PS00364">
    <property type="entry name" value="BACTERIAL_PQQ_2"/>
    <property type="match status" value="1"/>
</dbReference>
<name>DHM1_METEA</name>
<sequence>MSRFVTSVSALAMLALAPAALSSGAYANDKLVELSKSDDNWVMPGKNYDSNNFSDLKQINKGNVKQLRPAWTFSTGLLNGHEGAPLVVDGKMYIHTSFPNNTFALGLDDPGTILWQDKPKQNPAARAVACCDLVNRGLAYWPGDGKTPALILKTQLDGNVAALNAETGETVWKVENSDIKVGSTLTIAPYVVKDKVIIGSSGAELGVRGYLTAYDVKTGEQVWRAYATGPDKDLLLASDFNIKNPHYGQKGLGTGTWEGDAWKIGGGTNWGWYAYDPGTNLIYFGTGNPAPWNETMRPGDNKWTMTIFGRDADTGEAKFGYQKTPHDEWDYAGVNVMMLSEQKDKDGKARKLLTHPDRNGIVYTLDRTDGALVSANKLDDTVNVFKSVDLKTGQPVRDPEYGTRMDHLAKDICPSAMGYHNQGHDSYDPKRELFFMGINHICMDWEPFMLPYRAGQFFVGATLNMYPGPKGDRQNYEGLGQIKAYNAITGDYKWEKMERFAVWGGTMATAGDLVFYGTLDGYLKARDSDTGDLLWKFKIPSGAIGYPMTYTHKGTQYVAIYYGVGGWPGVGLVFDLADPTAGLGAVGAFKKLANYTQMGGGVVVFSLDGKGPYDDPNVGEWKSAAK</sequence>
<accession>P16027</accession>
<accession>C5AQA9</accession>
<gene>
    <name type="primary">moxF</name>
    <name type="synonym">mxaF</name>
    <name type="ordered locus">MexAM1_META1p4538</name>
</gene>
<protein>
    <recommendedName>
        <fullName>Methanol dehydrogenase [cytochrome c] subunit 1</fullName>
        <ecNumber>1.1.2.7</ecNumber>
    </recommendedName>
    <alternativeName>
        <fullName>MDH large subunit alpha</fullName>
    </alternativeName>
    <alternativeName>
        <fullName>MEDH</fullName>
    </alternativeName>
</protein>